<proteinExistence type="inferred from homology"/>
<keyword id="KW-0067">ATP-binding</keyword>
<keyword id="KW-0119">Carbohydrate metabolism</keyword>
<keyword id="KW-0418">Kinase</keyword>
<keyword id="KW-0479">Metal-binding</keyword>
<keyword id="KW-0547">Nucleotide-binding</keyword>
<keyword id="KW-0808">Transferase</keyword>
<keyword id="KW-0862">Zinc</keyword>
<accession>Q57QD5</accession>
<evidence type="ECO:0000255" key="1">
    <source>
        <dbReference type="HAMAP-Rule" id="MF_01271"/>
    </source>
</evidence>
<name>NAGK_SALCH</name>
<sequence>MYYGFDIGGTKIALGAFDSTRRLQWEKRVPTPHTSYSAFLDAVCELVAEADQRFGVKGSVGIGIPGMPETEDGTLYAANVPAASGKPLRADLSARLDRDVRLDNDANCFALSEAWDDEFTQYPLVMGLILGTGVGGGLVLNGKPITGQSYITGEFGHMRLPVDALTLMGFDFPLRRCGCGQMGCIENYLSGRGFAWLYQHYYDQSLQAPEIIALWEQGDEQAHAHVERYLDLLAVCLGNILTIVDPDLLVIGGGLSNFTAITTQLAERLPRHLLPVARAPRIERARHGDAGGMRGAAFLHLTD</sequence>
<reference key="1">
    <citation type="journal article" date="2005" name="Nucleic Acids Res.">
        <title>The genome sequence of Salmonella enterica serovar Choleraesuis, a highly invasive and resistant zoonotic pathogen.</title>
        <authorList>
            <person name="Chiu C.-H."/>
            <person name="Tang P."/>
            <person name="Chu C."/>
            <person name="Hu S."/>
            <person name="Bao Q."/>
            <person name="Yu J."/>
            <person name="Chou Y.-Y."/>
            <person name="Wang H.-S."/>
            <person name="Lee Y.-S."/>
        </authorList>
    </citation>
    <scope>NUCLEOTIDE SEQUENCE [LARGE SCALE GENOMIC DNA]</scope>
    <source>
        <strain>SC-B67</strain>
    </source>
</reference>
<comment type="function">
    <text evidence="1">Catalyzes the phosphorylation of N-acetyl-D-glucosamine (GlcNAc) derived from cell-wall degradation, yielding GlcNAc-6-P.</text>
</comment>
<comment type="catalytic activity">
    <reaction evidence="1">
        <text>N-acetyl-D-glucosamine + ATP = N-acetyl-D-glucosamine 6-phosphate + ADP + H(+)</text>
        <dbReference type="Rhea" id="RHEA:17417"/>
        <dbReference type="ChEBI" id="CHEBI:15378"/>
        <dbReference type="ChEBI" id="CHEBI:30616"/>
        <dbReference type="ChEBI" id="CHEBI:57513"/>
        <dbReference type="ChEBI" id="CHEBI:456216"/>
        <dbReference type="ChEBI" id="CHEBI:506227"/>
        <dbReference type="EC" id="2.7.1.59"/>
    </reaction>
</comment>
<comment type="pathway">
    <text evidence="1">Cell wall biogenesis; peptidoglycan recycling.</text>
</comment>
<comment type="similarity">
    <text evidence="1">Belongs to the ROK (NagC/XylR) family. NagK subfamily.</text>
</comment>
<feature type="chain" id="PRO_0000270111" description="N-acetyl-D-glucosamine kinase">
    <location>
        <begin position="1"/>
        <end position="303"/>
    </location>
</feature>
<feature type="binding site" evidence="1">
    <location>
        <begin position="4"/>
        <end position="11"/>
    </location>
    <ligand>
        <name>ATP</name>
        <dbReference type="ChEBI" id="CHEBI:30616"/>
    </ligand>
</feature>
<feature type="binding site" evidence="1">
    <location>
        <begin position="133"/>
        <end position="140"/>
    </location>
    <ligand>
        <name>ATP</name>
        <dbReference type="ChEBI" id="CHEBI:30616"/>
    </ligand>
</feature>
<feature type="binding site" evidence="1">
    <location>
        <position position="157"/>
    </location>
    <ligand>
        <name>Zn(2+)</name>
        <dbReference type="ChEBI" id="CHEBI:29105"/>
    </ligand>
</feature>
<feature type="binding site" evidence="1">
    <location>
        <position position="177"/>
    </location>
    <ligand>
        <name>Zn(2+)</name>
        <dbReference type="ChEBI" id="CHEBI:29105"/>
    </ligand>
</feature>
<feature type="binding site" evidence="1">
    <location>
        <position position="179"/>
    </location>
    <ligand>
        <name>Zn(2+)</name>
        <dbReference type="ChEBI" id="CHEBI:29105"/>
    </ligand>
</feature>
<feature type="binding site" evidence="1">
    <location>
        <position position="184"/>
    </location>
    <ligand>
        <name>Zn(2+)</name>
        <dbReference type="ChEBI" id="CHEBI:29105"/>
    </ligand>
</feature>
<protein>
    <recommendedName>
        <fullName evidence="1">N-acetyl-D-glucosamine kinase</fullName>
        <ecNumber evidence="1">2.7.1.59</ecNumber>
    </recommendedName>
    <alternativeName>
        <fullName evidence="1">GlcNAc kinase</fullName>
    </alternativeName>
</protein>
<organism>
    <name type="scientific">Salmonella choleraesuis (strain SC-B67)</name>
    <dbReference type="NCBI Taxonomy" id="321314"/>
    <lineage>
        <taxon>Bacteria</taxon>
        <taxon>Pseudomonadati</taxon>
        <taxon>Pseudomonadota</taxon>
        <taxon>Gammaproteobacteria</taxon>
        <taxon>Enterobacterales</taxon>
        <taxon>Enterobacteriaceae</taxon>
        <taxon>Salmonella</taxon>
    </lineage>
</organism>
<dbReference type="EC" id="2.7.1.59" evidence="1"/>
<dbReference type="EMBL" id="AE017220">
    <property type="protein sequence ID" value="AAX65076.1"/>
    <property type="molecule type" value="Genomic_DNA"/>
</dbReference>
<dbReference type="RefSeq" id="WP_000291242.1">
    <property type="nucleotide sequence ID" value="NC_006905.1"/>
</dbReference>
<dbReference type="SMR" id="Q57QD5"/>
<dbReference type="KEGG" id="sec:SCH_1170"/>
<dbReference type="HOGENOM" id="CLU_036604_0_3_6"/>
<dbReference type="UniPathway" id="UPA00544"/>
<dbReference type="Proteomes" id="UP000000538">
    <property type="component" value="Chromosome"/>
</dbReference>
<dbReference type="GO" id="GO:0005524">
    <property type="term" value="F:ATP binding"/>
    <property type="evidence" value="ECO:0007669"/>
    <property type="project" value="UniProtKB-UniRule"/>
</dbReference>
<dbReference type="GO" id="GO:0045127">
    <property type="term" value="F:N-acetylglucosamine kinase activity"/>
    <property type="evidence" value="ECO:0007669"/>
    <property type="project" value="UniProtKB-UniRule"/>
</dbReference>
<dbReference type="GO" id="GO:0008270">
    <property type="term" value="F:zinc ion binding"/>
    <property type="evidence" value="ECO:0007669"/>
    <property type="project" value="UniProtKB-UniRule"/>
</dbReference>
<dbReference type="GO" id="GO:0006044">
    <property type="term" value="P:N-acetylglucosamine metabolic process"/>
    <property type="evidence" value="ECO:0007669"/>
    <property type="project" value="UniProtKB-UniRule"/>
</dbReference>
<dbReference type="GO" id="GO:0009254">
    <property type="term" value="P:peptidoglycan turnover"/>
    <property type="evidence" value="ECO:0007669"/>
    <property type="project" value="UniProtKB-UniRule"/>
</dbReference>
<dbReference type="CDD" id="cd24057">
    <property type="entry name" value="ASKHA_NBD_ROK_NAGK"/>
    <property type="match status" value="1"/>
</dbReference>
<dbReference type="FunFam" id="3.30.420.40:FF:000049">
    <property type="entry name" value="N-acetyl-D-glucosamine kinase"/>
    <property type="match status" value="1"/>
</dbReference>
<dbReference type="FunFam" id="3.30.420.40:FF:000051">
    <property type="entry name" value="N-acetyl-D-glucosamine kinase"/>
    <property type="match status" value="1"/>
</dbReference>
<dbReference type="Gene3D" id="3.30.420.40">
    <property type="match status" value="2"/>
</dbReference>
<dbReference type="HAMAP" id="MF_01271">
    <property type="entry name" value="GlcNAc_kinase"/>
    <property type="match status" value="1"/>
</dbReference>
<dbReference type="InterPro" id="IPR043129">
    <property type="entry name" value="ATPase_NBD"/>
</dbReference>
<dbReference type="InterPro" id="IPR023505">
    <property type="entry name" value="N-acetyl-D-glucosamine_kinase"/>
</dbReference>
<dbReference type="InterPro" id="IPR000600">
    <property type="entry name" value="ROK"/>
</dbReference>
<dbReference type="InterPro" id="IPR049874">
    <property type="entry name" value="ROK_cs"/>
</dbReference>
<dbReference type="NCBIfam" id="NF009835">
    <property type="entry name" value="PRK13310.1"/>
    <property type="match status" value="1"/>
</dbReference>
<dbReference type="PANTHER" id="PTHR18964:SF162">
    <property type="entry name" value="N-ACETYL-D-GLUCOSAMINE KINASE"/>
    <property type="match status" value="1"/>
</dbReference>
<dbReference type="PANTHER" id="PTHR18964">
    <property type="entry name" value="ROK (REPRESSOR, ORF, KINASE) FAMILY"/>
    <property type="match status" value="1"/>
</dbReference>
<dbReference type="Pfam" id="PF00480">
    <property type="entry name" value="ROK"/>
    <property type="match status" value="1"/>
</dbReference>
<dbReference type="SUPFAM" id="SSF53067">
    <property type="entry name" value="Actin-like ATPase domain"/>
    <property type="match status" value="1"/>
</dbReference>
<dbReference type="PROSITE" id="PS01125">
    <property type="entry name" value="ROK"/>
    <property type="match status" value="1"/>
</dbReference>
<gene>
    <name evidence="1" type="primary">nagK</name>
    <name type="ordered locus">SCH_1170</name>
</gene>